<keyword id="KW-0963">Cytoplasm</keyword>
<keyword id="KW-0489">Methyltransferase</keyword>
<keyword id="KW-0949">S-adenosyl-L-methionine</keyword>
<keyword id="KW-0808">Transferase</keyword>
<organism>
    <name type="scientific">Acidovorax sp. (strain JS42)</name>
    <dbReference type="NCBI Taxonomy" id="232721"/>
    <lineage>
        <taxon>Bacteria</taxon>
        <taxon>Pseudomonadati</taxon>
        <taxon>Pseudomonadota</taxon>
        <taxon>Betaproteobacteria</taxon>
        <taxon>Burkholderiales</taxon>
        <taxon>Comamonadaceae</taxon>
        <taxon>Acidovorax</taxon>
    </lineage>
</organism>
<sequence>MHDWDPALYQRFESEHTRPAVELLARVSHPAPRHIVDLGCGNGNSTQLLLERFPQSQLIGLDNSEAMLASARKRLPGVPFVQADIADWAPTVAPDLIFANASLQWVAGHAGLFARLMRCLAPGGVLAVQMPDNLDQPSHQLMRELASQSAWRDQLAHAADQRAALLSVEAYYDLLAPMACRVDIWHTAYRHVMPSVQAIVEWLESTGLKPFLDPLPAVLRDAYLQAYTQRIGEAYTKRADGHRLFAFPRLFIVAQRAP</sequence>
<feature type="chain" id="PRO_1000056553" description="Trans-aconitate 2-methyltransferase">
    <location>
        <begin position="1"/>
        <end position="258"/>
    </location>
</feature>
<comment type="function">
    <text evidence="1">Catalyzes the S-adenosylmethionine monomethyl esterification of trans-aconitate.</text>
</comment>
<comment type="catalytic activity">
    <reaction evidence="1">
        <text>trans-aconitate + S-adenosyl-L-methionine = (E)-3-(methoxycarbonyl)pent-2-enedioate + S-adenosyl-L-homocysteine</text>
        <dbReference type="Rhea" id="RHEA:14969"/>
        <dbReference type="ChEBI" id="CHEBI:15708"/>
        <dbReference type="ChEBI" id="CHEBI:57470"/>
        <dbReference type="ChEBI" id="CHEBI:57856"/>
        <dbReference type="ChEBI" id="CHEBI:59789"/>
        <dbReference type="EC" id="2.1.1.144"/>
    </reaction>
</comment>
<comment type="subcellular location">
    <subcellularLocation>
        <location evidence="1">Cytoplasm</location>
    </subcellularLocation>
</comment>
<comment type="similarity">
    <text evidence="1">Belongs to the methyltransferase superfamily. Tam family.</text>
</comment>
<gene>
    <name evidence="1" type="primary">tam</name>
    <name type="ordered locus">Ajs_2790</name>
</gene>
<accession>A1W9K6</accession>
<proteinExistence type="inferred from homology"/>
<name>TAM_ACISJ</name>
<protein>
    <recommendedName>
        <fullName evidence="1">Trans-aconitate 2-methyltransferase</fullName>
        <ecNumber evidence="1">2.1.1.144</ecNumber>
    </recommendedName>
</protein>
<evidence type="ECO:0000255" key="1">
    <source>
        <dbReference type="HAMAP-Rule" id="MF_00560"/>
    </source>
</evidence>
<dbReference type="EC" id="2.1.1.144" evidence="1"/>
<dbReference type="EMBL" id="CP000539">
    <property type="protein sequence ID" value="ABM42931.1"/>
    <property type="molecule type" value="Genomic_DNA"/>
</dbReference>
<dbReference type="SMR" id="A1W9K6"/>
<dbReference type="STRING" id="232721.Ajs_2790"/>
<dbReference type="KEGG" id="ajs:Ajs_2790"/>
<dbReference type="eggNOG" id="COG4106">
    <property type="taxonomic scope" value="Bacteria"/>
</dbReference>
<dbReference type="HOGENOM" id="CLU_037990_5_2_4"/>
<dbReference type="Proteomes" id="UP000000645">
    <property type="component" value="Chromosome"/>
</dbReference>
<dbReference type="GO" id="GO:0005737">
    <property type="term" value="C:cytoplasm"/>
    <property type="evidence" value="ECO:0007669"/>
    <property type="project" value="UniProtKB-SubCell"/>
</dbReference>
<dbReference type="GO" id="GO:0030798">
    <property type="term" value="F:trans-aconitate 2-methyltransferase activity"/>
    <property type="evidence" value="ECO:0007669"/>
    <property type="project" value="UniProtKB-UniRule"/>
</dbReference>
<dbReference type="GO" id="GO:0032259">
    <property type="term" value="P:methylation"/>
    <property type="evidence" value="ECO:0007669"/>
    <property type="project" value="UniProtKB-KW"/>
</dbReference>
<dbReference type="CDD" id="cd02440">
    <property type="entry name" value="AdoMet_MTases"/>
    <property type="match status" value="1"/>
</dbReference>
<dbReference type="Gene3D" id="1.10.150.290">
    <property type="entry name" value="S-adenosyl-L-methionine-dependent methyltransferases"/>
    <property type="match status" value="1"/>
</dbReference>
<dbReference type="Gene3D" id="3.40.50.150">
    <property type="entry name" value="Vaccinia Virus protein VP39"/>
    <property type="match status" value="1"/>
</dbReference>
<dbReference type="HAMAP" id="MF_00560">
    <property type="entry name" value="Tran_acon_Me_trans"/>
    <property type="match status" value="1"/>
</dbReference>
<dbReference type="InterPro" id="IPR041698">
    <property type="entry name" value="Methyltransf_25"/>
</dbReference>
<dbReference type="InterPro" id="IPR029063">
    <property type="entry name" value="SAM-dependent_MTases_sf"/>
</dbReference>
<dbReference type="InterPro" id="IPR023506">
    <property type="entry name" value="Trans-aconitate_MeTrfase"/>
</dbReference>
<dbReference type="InterPro" id="IPR023149">
    <property type="entry name" value="Trans_acon_MeTrfase_C"/>
</dbReference>
<dbReference type="NCBIfam" id="NF002463">
    <property type="entry name" value="PRK01683.1"/>
    <property type="match status" value="1"/>
</dbReference>
<dbReference type="PANTHER" id="PTHR43861:SF1">
    <property type="entry name" value="TRANS-ACONITATE 2-METHYLTRANSFERASE"/>
    <property type="match status" value="1"/>
</dbReference>
<dbReference type="PANTHER" id="PTHR43861">
    <property type="entry name" value="TRANS-ACONITATE 2-METHYLTRANSFERASE-RELATED"/>
    <property type="match status" value="1"/>
</dbReference>
<dbReference type="Pfam" id="PF13649">
    <property type="entry name" value="Methyltransf_25"/>
    <property type="match status" value="1"/>
</dbReference>
<dbReference type="SUPFAM" id="SSF53335">
    <property type="entry name" value="S-adenosyl-L-methionine-dependent methyltransferases"/>
    <property type="match status" value="1"/>
</dbReference>
<reference key="1">
    <citation type="submission" date="2006-12" db="EMBL/GenBank/DDBJ databases">
        <title>Complete sequence of chromosome 1 of Acidovorax sp. JS42.</title>
        <authorList>
            <person name="Copeland A."/>
            <person name="Lucas S."/>
            <person name="Lapidus A."/>
            <person name="Barry K."/>
            <person name="Detter J.C."/>
            <person name="Glavina del Rio T."/>
            <person name="Dalin E."/>
            <person name="Tice H."/>
            <person name="Pitluck S."/>
            <person name="Chertkov O."/>
            <person name="Brettin T."/>
            <person name="Bruce D."/>
            <person name="Han C."/>
            <person name="Tapia R."/>
            <person name="Gilna P."/>
            <person name="Schmutz J."/>
            <person name="Larimer F."/>
            <person name="Land M."/>
            <person name="Hauser L."/>
            <person name="Kyrpides N."/>
            <person name="Kim E."/>
            <person name="Stahl D."/>
            <person name="Richardson P."/>
        </authorList>
    </citation>
    <scope>NUCLEOTIDE SEQUENCE [LARGE SCALE GENOMIC DNA]</scope>
    <source>
        <strain>JS42</strain>
    </source>
</reference>